<sequence>MRKDAKENRQRIEEIAHKLFDEEGVENISMNRIAKELGIGMGTLYRHFKDKSDLCYYVIQRDLDIFITHFKQIKDDYHSNYEVMQVSLDYLLQFKIDNKALLQCIEAGNNKLRFYQSAFYQELFDFYYDLFKSDDDTYTKFKTDMLLQSLSTSVFAFQIEHRHISIEAYRNYLLNIYLDEVERND</sequence>
<name>Y2498_STAAW</name>
<accession>Q79ZX9</accession>
<protein>
    <recommendedName>
        <fullName>HTH-type transcriptional regulator MW2498</fullName>
    </recommendedName>
</protein>
<dbReference type="EMBL" id="BA000033">
    <property type="protein sequence ID" value="BAB96363.1"/>
    <property type="molecule type" value="Genomic_DNA"/>
</dbReference>
<dbReference type="RefSeq" id="WP_001224187.1">
    <property type="nucleotide sequence ID" value="NC_003923.1"/>
</dbReference>
<dbReference type="SMR" id="Q79ZX9"/>
<dbReference type="KEGG" id="sam:MW2498"/>
<dbReference type="HOGENOM" id="CLU_069356_17_2_9"/>
<dbReference type="GO" id="GO:0003677">
    <property type="term" value="F:DNA binding"/>
    <property type="evidence" value="ECO:0007669"/>
    <property type="project" value="UniProtKB-KW"/>
</dbReference>
<dbReference type="Gene3D" id="1.10.357.10">
    <property type="entry name" value="Tetracycline Repressor, domain 2"/>
    <property type="match status" value="1"/>
</dbReference>
<dbReference type="InterPro" id="IPR023772">
    <property type="entry name" value="DNA-bd_HTH_TetR-type_CS"/>
</dbReference>
<dbReference type="InterPro" id="IPR009057">
    <property type="entry name" value="Homeodomain-like_sf"/>
</dbReference>
<dbReference type="InterPro" id="IPR050624">
    <property type="entry name" value="HTH-type_Tx_Regulator"/>
</dbReference>
<dbReference type="InterPro" id="IPR001647">
    <property type="entry name" value="HTH_TetR"/>
</dbReference>
<dbReference type="PANTHER" id="PTHR43479">
    <property type="entry name" value="ACREF/ENVCD OPERON REPRESSOR-RELATED"/>
    <property type="match status" value="1"/>
</dbReference>
<dbReference type="PANTHER" id="PTHR43479:SF11">
    <property type="entry name" value="ACREF_ENVCD OPERON REPRESSOR-RELATED"/>
    <property type="match status" value="1"/>
</dbReference>
<dbReference type="Pfam" id="PF00440">
    <property type="entry name" value="TetR_N"/>
    <property type="match status" value="1"/>
</dbReference>
<dbReference type="PRINTS" id="PR00455">
    <property type="entry name" value="HTHTETR"/>
</dbReference>
<dbReference type="SUPFAM" id="SSF46689">
    <property type="entry name" value="Homeodomain-like"/>
    <property type="match status" value="1"/>
</dbReference>
<dbReference type="PROSITE" id="PS01081">
    <property type="entry name" value="HTH_TETR_1"/>
    <property type="match status" value="1"/>
</dbReference>
<dbReference type="PROSITE" id="PS50977">
    <property type="entry name" value="HTH_TETR_2"/>
    <property type="match status" value="1"/>
</dbReference>
<keyword id="KW-0238">DNA-binding</keyword>
<keyword id="KW-0804">Transcription</keyword>
<keyword id="KW-0805">Transcription regulation</keyword>
<organism>
    <name type="scientific">Staphylococcus aureus (strain MW2)</name>
    <dbReference type="NCBI Taxonomy" id="196620"/>
    <lineage>
        <taxon>Bacteria</taxon>
        <taxon>Bacillati</taxon>
        <taxon>Bacillota</taxon>
        <taxon>Bacilli</taxon>
        <taxon>Bacillales</taxon>
        <taxon>Staphylococcaceae</taxon>
        <taxon>Staphylococcus</taxon>
    </lineage>
</organism>
<reference key="1">
    <citation type="journal article" date="2002" name="Lancet">
        <title>Genome and virulence determinants of high virulence community-acquired MRSA.</title>
        <authorList>
            <person name="Baba T."/>
            <person name="Takeuchi F."/>
            <person name="Kuroda M."/>
            <person name="Yuzawa H."/>
            <person name="Aoki K."/>
            <person name="Oguchi A."/>
            <person name="Nagai Y."/>
            <person name="Iwama N."/>
            <person name="Asano K."/>
            <person name="Naimi T."/>
            <person name="Kuroda H."/>
            <person name="Cui L."/>
            <person name="Yamamoto K."/>
            <person name="Hiramatsu K."/>
        </authorList>
    </citation>
    <scope>NUCLEOTIDE SEQUENCE [LARGE SCALE GENOMIC DNA]</scope>
    <source>
        <strain>MW2</strain>
    </source>
</reference>
<proteinExistence type="predicted"/>
<gene>
    <name type="ordered locus">MW2498</name>
</gene>
<evidence type="ECO:0000255" key="1">
    <source>
        <dbReference type="PROSITE-ProRule" id="PRU00335"/>
    </source>
</evidence>
<feature type="chain" id="PRO_0000286694" description="HTH-type transcriptional regulator MW2498">
    <location>
        <begin position="1"/>
        <end position="185"/>
    </location>
</feature>
<feature type="domain" description="HTH tetR-type" evidence="1">
    <location>
        <begin position="6"/>
        <end position="66"/>
    </location>
</feature>
<feature type="DNA-binding region" description="H-T-H motif" evidence="1">
    <location>
        <begin position="29"/>
        <end position="48"/>
    </location>
</feature>